<sequence>MTSFQEVPLQTSNFAHVIFQNVAKSYLPNAHLECHYTLTPYIHPHPKDWVGIFKVGWSTARDYYTFLWSPMPEHYVEGSTVNCVLAFQGYYLPNDDGEFYQFCYVTHKGEIRGASTPFQFRASSPVEELLTMEDEGNSDMLVVTTKAGLLELKIEKTMKEKEELLKLIAVLEKETAQLREQVGRMERELNHEKERCDQLQAEQKGLTEVTQSLKMENEEFKKRFSDATSKAHQLEEDIVSVTHKAIEKETELDSLKDKLKKAQHEREQLECQLKTEKDEKELYKVHLKNTEIENTKLMSEVQTLKNLDGNKESVITHFKEEIGRLQLCLAEKENLQRTFLLTTSSKEDTFFLKEQLRKAEEQVQATRQEVVFLAKELSDAVNVRDRTMADLHTARLENEKVKKQLADAVAELKLNAMKKDQDKTDTLEHELRREVEDLKLRLQMAADHYKEKFKECQRLQKQINKLSDQSANNNNVFTKKMGNQQKVNDASVNTDPATSASTVDVKPSPSAAEADFDIVTKGQVCEMTKEIADKTEKYNKCKQLLQDEKAKCNKYADELAKMELKWKEQVKIAENVKLELAEVQDNYKLQLAEKDKEISGLTSHLENLSREKELKRSLENQAERKMEGQNSQSPQCLKTCSEQNGYVLTLSNAQPVLQYGNPYASQETRDGADGAFYPDEIQRPPVRVPSWGLEDNVVCSQPARNLSRPDGLEDSEDSKEDENAPTAPDPPSQHLRGHGTGFCFDSSFDVHKKCPLCELMFPPNYDQSKFEEHVESHWKVCPMCSEQFPPDYDQQVFERHVQTHFDQNVLNFD</sequence>
<name>TAXB1_PONAB</name>
<keyword id="KW-0025">Alternative splicing</keyword>
<keyword id="KW-0053">Apoptosis</keyword>
<keyword id="KW-0175">Coiled coil</keyword>
<keyword id="KW-0963">Cytoplasm</keyword>
<keyword id="KW-0968">Cytoplasmic vesicle</keyword>
<keyword id="KW-0479">Metal-binding</keyword>
<keyword id="KW-0496">Mitochondrion</keyword>
<keyword id="KW-0597">Phosphoprotein</keyword>
<keyword id="KW-1185">Reference proteome</keyword>
<keyword id="KW-0677">Repeat</keyword>
<keyword id="KW-0862">Zinc</keyword>
<keyword id="KW-0863">Zinc-finger</keyword>
<accession>Q5R4U3</accession>
<accession>Q5R566</accession>
<organism>
    <name type="scientific">Pongo abelii</name>
    <name type="common">Sumatran orangutan</name>
    <name type="synonym">Pongo pygmaeus abelii</name>
    <dbReference type="NCBI Taxonomy" id="9601"/>
    <lineage>
        <taxon>Eukaryota</taxon>
        <taxon>Metazoa</taxon>
        <taxon>Chordata</taxon>
        <taxon>Craniata</taxon>
        <taxon>Vertebrata</taxon>
        <taxon>Euteleostomi</taxon>
        <taxon>Mammalia</taxon>
        <taxon>Eutheria</taxon>
        <taxon>Euarchontoglires</taxon>
        <taxon>Primates</taxon>
        <taxon>Haplorrhini</taxon>
        <taxon>Catarrhini</taxon>
        <taxon>Hominidae</taxon>
        <taxon>Pongo</taxon>
    </lineage>
</organism>
<reference key="1">
    <citation type="submission" date="2004-11" db="EMBL/GenBank/DDBJ databases">
        <authorList>
            <consortium name="The German cDNA consortium"/>
        </authorList>
    </citation>
    <scope>NUCLEOTIDE SEQUENCE [LARGE SCALE MRNA] (ISOFORMS 1 AND 2)</scope>
    <source>
        <tissue>Brain cortex</tissue>
    </source>
</reference>
<protein>
    <recommendedName>
        <fullName>Tax1-binding protein 1 homolog</fullName>
    </recommendedName>
</protein>
<comment type="function">
    <text evidence="3">Ubiquitin-binding adapter that participates in inflammatory, antiviral and innate immune processes as well as selective autophagy regulation. Plays a key role in the negative regulation of NF-kappa-B and IRF3 signalings by acting as an adapter for the ubiquitin-editing enzyme A20/TNFAIP3 to bind and inactivate its substrates. Disrupts the interactions between the E3 ubiquitin ligase TRAF3 and TBK1/IKBKE to attenuate 'Lys63'-linked polyubiquitination of TBK1 and thereby IFN-beta production. Also recruits A20/TNFAIP3 to ubiquitinated signaling proteins TRAF6 and RIPK1, leading to their deubiquitination and disruption of IL-1 and TNF-induced NF-kappa-B signaling pathways. Inhibits virus-induced apoptosis by inducing the 'Lys-48'-linked polyubiquitination and degradation of MAVS via recruitment of the E3 ligase ITCH, thereby attenuating MAVS-mediated apoptosis signaling. As a macroautophagy/autophagy receptor, facilitates the xenophagic clearance of pathogenic bacteria such as Salmonella typhimurium and Mycobacterium tuberculosis. Upon NBR1 recruitment to the SQSTM1-ubiquitin condensates, acts as the major recruiter of RB1CC1 to these ubiquitin condensates to promote their autophagic degradation.</text>
</comment>
<comment type="subunit">
    <text evidence="3">Homooligomer. Interacts with TNFAIP3. Interacts with STARD13. Interacts with MYO6. Interacts with TOM1; the interaction is indirect and is mediated by MYO6, which acts as a bridge between TOM1 and TAX1BP1. Interacts with MAVS; this interaction induces MAVS polyubiquitination. Interacts with TNIP1. Interacts with TRAF6; this interaction mediates deubiquitination of TRAF6 and inhibition of NF-kappa-B activation. Interacts with RIPK1; this interaction negatively regulates RIPK1 ubiquitination. Interacts with NBR1. Interacts with TBK1. Interacts with RB1CC1. Interacts with SQSTM1. Interacts with AZI2.</text>
</comment>
<comment type="subcellular location">
    <subcellularLocation>
        <location evidence="3">Cytoplasm</location>
    </subcellularLocation>
    <subcellularLocation>
        <location evidence="3">Mitochondrion</location>
    </subcellularLocation>
    <subcellularLocation>
        <location evidence="3">Preautophagosomal structure</location>
    </subcellularLocation>
    <subcellularLocation>
        <location evidence="3">Cytoplasmic vesicle</location>
        <location evidence="3">Autophagosome</location>
    </subcellularLocation>
</comment>
<comment type="alternative products">
    <event type="alternative splicing"/>
    <isoform>
        <id>Q5R4U3-1</id>
        <name>1</name>
        <sequence type="displayed"/>
    </isoform>
    <isoform>
        <id>Q5R4U3-2</id>
        <name>2</name>
        <sequence type="described" ref="VSP_018356"/>
    </isoform>
</comment>
<comment type="domain">
    <text evidence="3">The C-terminal UBZ-type zinc fingers function as ubiquitin-binding domains.</text>
</comment>
<feature type="chain" id="PRO_0000234556" description="Tax1-binding protein 1 homolog">
    <location>
        <begin position="1"/>
        <end position="813"/>
    </location>
</feature>
<feature type="zinc finger region" description="UBZ1-type 1" evidence="5">
    <location>
        <begin position="751"/>
        <end position="777"/>
    </location>
</feature>
<feature type="zinc finger region" description="UBZ1-type 2" evidence="5">
    <location>
        <begin position="778"/>
        <end position="804"/>
    </location>
</feature>
<feature type="region of interest" description="Oligomerization" evidence="1">
    <location>
        <begin position="320"/>
        <end position="420"/>
    </location>
</feature>
<feature type="region of interest" description="Disordered" evidence="6">
    <location>
        <begin position="489"/>
        <end position="508"/>
    </location>
</feature>
<feature type="region of interest" description="Disordered" evidence="6">
    <location>
        <begin position="663"/>
        <end position="738"/>
    </location>
</feature>
<feature type="coiled-coil region" evidence="4">
    <location>
        <begin position="144"/>
        <end position="627"/>
    </location>
</feature>
<feature type="compositionally biased region" description="Polar residues" evidence="6">
    <location>
        <begin position="489"/>
        <end position="502"/>
    </location>
</feature>
<feature type="binding site" evidence="5">
    <location>
        <position position="754"/>
    </location>
    <ligand>
        <name>Zn(2+)</name>
        <dbReference type="ChEBI" id="CHEBI:29105"/>
        <label>1</label>
    </ligand>
</feature>
<feature type="binding site" evidence="5">
    <location>
        <position position="757"/>
    </location>
    <ligand>
        <name>Zn(2+)</name>
        <dbReference type="ChEBI" id="CHEBI:29105"/>
        <label>1</label>
    </ligand>
</feature>
<feature type="binding site" evidence="5">
    <location>
        <position position="773"/>
    </location>
    <ligand>
        <name>Zn(2+)</name>
        <dbReference type="ChEBI" id="CHEBI:29105"/>
        <label>1</label>
    </ligand>
</feature>
<feature type="binding site" evidence="5">
    <location>
        <position position="777"/>
    </location>
    <ligand>
        <name>Zn(2+)</name>
        <dbReference type="ChEBI" id="CHEBI:29105"/>
        <label>1</label>
    </ligand>
</feature>
<feature type="binding site" evidence="5">
    <location>
        <position position="781"/>
    </location>
    <ligand>
        <name>Zn(2+)</name>
        <dbReference type="ChEBI" id="CHEBI:29105"/>
        <label>2</label>
    </ligand>
</feature>
<feature type="binding site" evidence="5">
    <location>
        <position position="784"/>
    </location>
    <ligand>
        <name>Zn(2+)</name>
        <dbReference type="ChEBI" id="CHEBI:29105"/>
        <label>2</label>
    </ligand>
</feature>
<feature type="binding site" evidence="5">
    <location>
        <position position="800"/>
    </location>
    <ligand>
        <name>Zn(2+)</name>
        <dbReference type="ChEBI" id="CHEBI:29105"/>
        <label>2</label>
    </ligand>
</feature>
<feature type="binding site" evidence="5">
    <location>
        <position position="804"/>
    </location>
    <ligand>
        <name>Zn(2+)</name>
        <dbReference type="ChEBI" id="CHEBI:29105"/>
        <label>2</label>
    </ligand>
</feature>
<feature type="modified residue" description="Phosphoserine" evidence="2">
    <location>
        <position position="124"/>
    </location>
</feature>
<feature type="modified residue" description="Phosphoserine" evidence="3">
    <location>
        <position position="138"/>
    </location>
</feature>
<feature type="modified residue" description="Phosphoserine" evidence="3">
    <location>
        <position position="225"/>
    </location>
</feature>
<feature type="modified residue" description="Phosphoserine" evidence="3">
    <location>
        <position position="617"/>
    </location>
</feature>
<feature type="modified residue" description="Phosphoserine" evidence="2">
    <location>
        <position position="633"/>
    </location>
</feature>
<feature type="modified residue" description="Phosphoserine" evidence="3">
    <location>
        <position position="690"/>
    </location>
</feature>
<feature type="splice variant" id="VSP_018356" description="In isoform 2." evidence="7">
    <location>
        <begin position="589"/>
        <end position="612"/>
    </location>
</feature>
<feature type="sequence conflict" description="In Ref. 1; CAH93100." evidence="8" ref="1">
    <original>T</original>
    <variation>I</variation>
    <location>
        <position position="295"/>
    </location>
</feature>
<feature type="sequence conflict" description="In Ref. 1; CAH93100." evidence="8" ref="1">
    <original>M</original>
    <variation>I</variation>
    <location>
        <position position="388"/>
    </location>
</feature>
<dbReference type="EMBL" id="CR861000">
    <property type="protein sequence ID" value="CAH93100.1"/>
    <property type="molecule type" value="mRNA"/>
</dbReference>
<dbReference type="EMBL" id="CR861148">
    <property type="protein sequence ID" value="CAH93223.1"/>
    <property type="molecule type" value="mRNA"/>
</dbReference>
<dbReference type="RefSeq" id="NP_001126895.1">
    <molecule id="Q5R4U3-2"/>
    <property type="nucleotide sequence ID" value="NM_001133423.2"/>
</dbReference>
<dbReference type="RefSeq" id="NP_001128892.2">
    <molecule id="Q5R4U3-1"/>
    <property type="nucleotide sequence ID" value="NM_001135420.2"/>
</dbReference>
<dbReference type="RefSeq" id="NP_001417444.1">
    <molecule id="Q5R4U3-1"/>
    <property type="nucleotide sequence ID" value="NM_001430515.1"/>
</dbReference>
<dbReference type="RefSeq" id="NP_001417449.1">
    <molecule id="Q5R4U3-2"/>
    <property type="nucleotide sequence ID" value="NM_001430520.1"/>
</dbReference>
<dbReference type="BMRB" id="Q5R4U3"/>
<dbReference type="SMR" id="Q5R4U3"/>
<dbReference type="FunCoup" id="Q5R4U3">
    <property type="interactions" value="1289"/>
</dbReference>
<dbReference type="STRING" id="9601.ENSPPYP00000019830"/>
<dbReference type="GeneID" id="100189828"/>
<dbReference type="KEGG" id="pon:100189828"/>
<dbReference type="CTD" id="8887"/>
<dbReference type="eggNOG" id="ENOG502QQ1D">
    <property type="taxonomic scope" value="Eukaryota"/>
</dbReference>
<dbReference type="InParanoid" id="Q5R4U3"/>
<dbReference type="OrthoDB" id="10015001at2759"/>
<dbReference type="Proteomes" id="UP000001595">
    <property type="component" value="Unplaced"/>
</dbReference>
<dbReference type="GO" id="GO:0005776">
    <property type="term" value="C:autophagosome"/>
    <property type="evidence" value="ECO:0007669"/>
    <property type="project" value="UniProtKB-SubCell"/>
</dbReference>
<dbReference type="GO" id="GO:0031410">
    <property type="term" value="C:cytoplasmic vesicle"/>
    <property type="evidence" value="ECO:0007669"/>
    <property type="project" value="UniProtKB-KW"/>
</dbReference>
<dbReference type="GO" id="GO:0005739">
    <property type="term" value="C:mitochondrion"/>
    <property type="evidence" value="ECO:0007669"/>
    <property type="project" value="UniProtKB-SubCell"/>
</dbReference>
<dbReference type="GO" id="GO:0000407">
    <property type="term" value="C:phagophore assembly site"/>
    <property type="evidence" value="ECO:0007669"/>
    <property type="project" value="UniProtKB-SubCell"/>
</dbReference>
<dbReference type="GO" id="GO:0008270">
    <property type="term" value="F:zinc ion binding"/>
    <property type="evidence" value="ECO:0007669"/>
    <property type="project" value="UniProtKB-KW"/>
</dbReference>
<dbReference type="GO" id="GO:0006915">
    <property type="term" value="P:apoptotic process"/>
    <property type="evidence" value="ECO:0007669"/>
    <property type="project" value="UniProtKB-KW"/>
</dbReference>
<dbReference type="GO" id="GO:0043066">
    <property type="term" value="P:negative regulation of apoptotic process"/>
    <property type="evidence" value="ECO:0007669"/>
    <property type="project" value="TreeGrafter"/>
</dbReference>
<dbReference type="CDD" id="cd21969">
    <property type="entry name" value="Zn-C2H2_TAX1BP1_rpt1"/>
    <property type="match status" value="1"/>
</dbReference>
<dbReference type="CDD" id="cd21970">
    <property type="entry name" value="Zn-C2H2_TAX1BP1_rpt2"/>
    <property type="match status" value="1"/>
</dbReference>
<dbReference type="FunFam" id="2.60.40.2840:FF:000002">
    <property type="entry name" value="Tax1-binding protein 1 isoform 2"/>
    <property type="match status" value="1"/>
</dbReference>
<dbReference type="Gene3D" id="2.60.40.2840">
    <property type="match status" value="1"/>
</dbReference>
<dbReference type="Gene3D" id="6.20.250.40">
    <property type="match status" value="1"/>
</dbReference>
<dbReference type="InterPro" id="IPR012852">
    <property type="entry name" value="CALCOCO1-like"/>
</dbReference>
<dbReference type="InterPro" id="IPR041641">
    <property type="entry name" value="CALCOCO1/2_Zn_UBZ1"/>
</dbReference>
<dbReference type="InterPro" id="IPR041611">
    <property type="entry name" value="SKICH"/>
</dbReference>
<dbReference type="InterPro" id="IPR051002">
    <property type="entry name" value="UBA_autophagy_assoc_protein"/>
</dbReference>
<dbReference type="PANTHER" id="PTHR31915">
    <property type="entry name" value="SKICH DOMAIN-CONTAINING PROTEIN"/>
    <property type="match status" value="1"/>
</dbReference>
<dbReference type="PANTHER" id="PTHR31915:SF8">
    <property type="entry name" value="TAX1-BINDING PROTEIN 1"/>
    <property type="match status" value="1"/>
</dbReference>
<dbReference type="Pfam" id="PF07888">
    <property type="entry name" value="CALCOCO1"/>
    <property type="match status" value="1"/>
</dbReference>
<dbReference type="Pfam" id="PF17751">
    <property type="entry name" value="SKICH"/>
    <property type="match status" value="1"/>
</dbReference>
<dbReference type="Pfam" id="PF18112">
    <property type="entry name" value="Zn-C2H2_12"/>
    <property type="match status" value="2"/>
</dbReference>
<dbReference type="PROSITE" id="PS51905">
    <property type="entry name" value="ZF_UBZ1"/>
    <property type="match status" value="2"/>
</dbReference>
<proteinExistence type="evidence at transcript level"/>
<evidence type="ECO:0000250" key="1"/>
<evidence type="ECO:0000250" key="2">
    <source>
        <dbReference type="UniProtKB" id="Q3UKC1"/>
    </source>
</evidence>
<evidence type="ECO:0000250" key="3">
    <source>
        <dbReference type="UniProtKB" id="Q86VP1"/>
    </source>
</evidence>
<evidence type="ECO:0000255" key="4"/>
<evidence type="ECO:0000255" key="5">
    <source>
        <dbReference type="PROSITE-ProRule" id="PRU01253"/>
    </source>
</evidence>
<evidence type="ECO:0000256" key="6">
    <source>
        <dbReference type="SAM" id="MobiDB-lite"/>
    </source>
</evidence>
<evidence type="ECO:0000303" key="7">
    <source ref="1"/>
</evidence>
<evidence type="ECO:0000305" key="8"/>
<gene>
    <name type="primary">TAX1BP1</name>
</gene>